<comment type="function">
    <text evidence="1 4">Expressed in peripheral macrophages and intestinal myeloid-derived cells, is required for optimal PRR (pattern recognition receptor)-induced signaling, cytokine secretion, and bacterial clearance. Upon stimulation of a broad range of PRRs (pattern recognition receptor) such as NOD2 or TLR2, TLR3, TLR4, TLR5, TLR7 and TLR9, associates with YWHAQ/14-3-3T, which in turn leads to the recruitment and activation of MAP kinases and NF-kappa-B signaling complexes that amplifies PRR-induced downstream signals and cytokine secretion (By similarity). In the intestine, regulates adherens junction stability by regulating the degradation of CYTH1 and CYTH2, probably acting as substrate cofactor for SCF E3 ubiquitin-protein ligase complexes. Stabilizes adherens junctions by limiting CYTH1-dependent ARF6 activation (PubMed:29420262).</text>
</comment>
<comment type="subunit">
    <text evidence="1">Interacts with IRAK1, NOD2 and RIPK2; the interaction takes place upon PRR stimulation. Interacts with YWHAQ/14-3-3T; the interaction increases upon PRR stimulation and is required for cellular signaling pathway activation and cytokine secretion. Interacts (via N-terminal domain) with CYTH1 and CYTH2 (via their N-terminal domains). Interacts with FBXW11 and BTRC; associates with SCF E3 ubiquitin-protein ligase complexes (By similarity).</text>
</comment>
<comment type="subcellular location">
    <subcellularLocation>
        <location evidence="1">Nucleus</location>
    </subcellularLocation>
    <subcellularLocation>
        <location evidence="1">Cytoplasm</location>
    </subcellularLocation>
    <text evidence="1">Translocates to the nucleus upon NOD2 stimulation.</text>
</comment>
<comment type="disruption phenotype">
    <text evidence="4">After infection with Citrobacter rodentium, mutants show significantly increased bacterial loads at day 5 compared to wild-types. They are able to control the infection by day 12 post-infection, they exhibit significantly shortened colon length. They don't have impaired cytokine response (PubMed:29420262). Mutants also exhibit impaired recovery from dextran sodium sulfate-induces colitis, they show increased body weight loss and reduced colon length (PubMed:29420262).</text>
</comment>
<protein>
    <recommendedName>
        <fullName evidence="1">Innate immunity activator protein</fullName>
    </recommendedName>
</protein>
<evidence type="ECO:0000250" key="1">
    <source>
        <dbReference type="UniProtKB" id="Q3KP66"/>
    </source>
</evidence>
<evidence type="ECO:0000255" key="2"/>
<evidence type="ECO:0000256" key="3">
    <source>
        <dbReference type="SAM" id="MobiDB-lite"/>
    </source>
</evidence>
<evidence type="ECO:0000269" key="4">
    <source>
    </source>
</evidence>
<evidence type="ECO:0000305" key="5"/>
<organism>
    <name type="scientific">Mus musculus</name>
    <name type="common">Mouse</name>
    <dbReference type="NCBI Taxonomy" id="10090"/>
    <lineage>
        <taxon>Eukaryota</taxon>
        <taxon>Metazoa</taxon>
        <taxon>Chordata</taxon>
        <taxon>Craniata</taxon>
        <taxon>Vertebrata</taxon>
        <taxon>Euteleostomi</taxon>
        <taxon>Mammalia</taxon>
        <taxon>Eutheria</taxon>
        <taxon>Euarchontoglires</taxon>
        <taxon>Glires</taxon>
        <taxon>Rodentia</taxon>
        <taxon>Myomorpha</taxon>
        <taxon>Muroidea</taxon>
        <taxon>Muridae</taxon>
        <taxon>Murinae</taxon>
        <taxon>Mus</taxon>
        <taxon>Mus</taxon>
    </lineage>
</organism>
<name>INAVA_MOUSE</name>
<accession>Q7TN12</accession>
<accession>Q7TN27</accession>
<accession>Q8BGK3</accession>
<feature type="chain" id="PRO_0000251730" description="Innate immunity activator protein">
    <location>
        <begin position="1"/>
        <end position="663"/>
    </location>
</feature>
<feature type="region of interest" description="Disordered" evidence="3">
    <location>
        <begin position="1"/>
        <end position="73"/>
    </location>
</feature>
<feature type="region of interest" description="Disordered" evidence="3">
    <location>
        <begin position="219"/>
        <end position="363"/>
    </location>
</feature>
<feature type="region of interest" description="Disordered" evidence="3">
    <location>
        <begin position="375"/>
        <end position="405"/>
    </location>
</feature>
<feature type="region of interest" description="Disordered" evidence="3">
    <location>
        <begin position="448"/>
        <end position="483"/>
    </location>
</feature>
<feature type="coiled-coil region" evidence="2">
    <location>
        <begin position="117"/>
        <end position="147"/>
    </location>
</feature>
<feature type="short sequence motif" description="Nuclear localization signal (NLS) 1" evidence="1">
    <location>
        <begin position="164"/>
        <end position="170"/>
    </location>
</feature>
<feature type="short sequence motif" description="Nuclear localization signal (NLS) 2" evidence="1">
    <location>
        <begin position="332"/>
        <end position="338"/>
    </location>
</feature>
<feature type="short sequence motif" description="Nuclear localization signal (NLS) 3" evidence="1">
    <location>
        <begin position="422"/>
        <end position="428"/>
    </location>
</feature>
<feature type="compositionally biased region" description="Low complexity" evidence="3">
    <location>
        <begin position="23"/>
        <end position="47"/>
    </location>
</feature>
<feature type="compositionally biased region" description="Basic and acidic residues" evidence="3">
    <location>
        <begin position="50"/>
        <end position="59"/>
    </location>
</feature>
<feature type="compositionally biased region" description="Basic and acidic residues" evidence="3">
    <location>
        <begin position="225"/>
        <end position="246"/>
    </location>
</feature>
<feature type="compositionally biased region" description="Low complexity" evidence="3">
    <location>
        <begin position="259"/>
        <end position="272"/>
    </location>
</feature>
<feature type="compositionally biased region" description="Pro residues" evidence="3">
    <location>
        <begin position="282"/>
        <end position="298"/>
    </location>
</feature>
<feature type="compositionally biased region" description="Basic and acidic residues" evidence="3">
    <location>
        <begin position="327"/>
        <end position="340"/>
    </location>
</feature>
<feature type="compositionally biased region" description="Polar residues" evidence="3">
    <location>
        <begin position="349"/>
        <end position="361"/>
    </location>
</feature>
<feature type="compositionally biased region" description="Low complexity" evidence="3">
    <location>
        <begin position="455"/>
        <end position="475"/>
    </location>
</feature>
<feature type="sequence conflict" description="In Ref. 2; BAC25149/BAC25571." evidence="5" ref="2">
    <original>R</original>
    <variation>G</variation>
    <location>
        <position position="564"/>
    </location>
</feature>
<proteinExistence type="evidence at transcript level"/>
<dbReference type="EMBL" id="BC052416">
    <property type="protein sequence ID" value="AAH52416.2"/>
    <property type="molecule type" value="mRNA"/>
</dbReference>
<dbReference type="EMBL" id="BC053100">
    <property type="protein sequence ID" value="AAH53100.1"/>
    <property type="molecule type" value="mRNA"/>
</dbReference>
<dbReference type="EMBL" id="AK006603">
    <property type="protein sequence ID" value="BAC25149.1"/>
    <property type="molecule type" value="mRNA"/>
</dbReference>
<dbReference type="EMBL" id="AK018917">
    <property type="protein sequence ID" value="BAC25571.1"/>
    <property type="molecule type" value="mRNA"/>
</dbReference>
<dbReference type="CCDS" id="CCDS15325.2"/>
<dbReference type="RefSeq" id="NP_083148.3">
    <property type="nucleotide sequence ID" value="NM_028872.3"/>
</dbReference>
<dbReference type="SMR" id="Q7TN12"/>
<dbReference type="FunCoup" id="Q7TN12">
    <property type="interactions" value="1827"/>
</dbReference>
<dbReference type="STRING" id="10090.ENSMUSP00000113785"/>
<dbReference type="GlyGen" id="Q7TN12">
    <property type="glycosylation" value="2 sites"/>
</dbReference>
<dbReference type="iPTMnet" id="Q7TN12"/>
<dbReference type="PhosphoSitePlus" id="Q7TN12"/>
<dbReference type="PaxDb" id="10090-ENSMUSP00000113785"/>
<dbReference type="ProteomicsDB" id="266989"/>
<dbReference type="DNASU" id="67313"/>
<dbReference type="Ensembl" id="ENSMUST00000120339.8">
    <property type="protein sequence ID" value="ENSMUSP00000113785.3"/>
    <property type="gene ID" value="ENSMUSG00000041605.17"/>
</dbReference>
<dbReference type="GeneID" id="67313"/>
<dbReference type="KEGG" id="mmu:67313"/>
<dbReference type="AGR" id="MGI:1921579"/>
<dbReference type="CTD" id="55765"/>
<dbReference type="MGI" id="MGI:1921579">
    <property type="gene designation" value="Inava"/>
</dbReference>
<dbReference type="eggNOG" id="KOG3529">
    <property type="taxonomic scope" value="Eukaryota"/>
</dbReference>
<dbReference type="GeneTree" id="ENSGT00940000154102"/>
<dbReference type="InParanoid" id="Q7TN12"/>
<dbReference type="OrthoDB" id="10063592at2759"/>
<dbReference type="PhylomeDB" id="Q7TN12"/>
<dbReference type="BioGRID-ORCS" id="67313">
    <property type="hits" value="1 hit in 76 CRISPR screens"/>
</dbReference>
<dbReference type="ChiTaRS" id="Inava">
    <property type="organism name" value="mouse"/>
</dbReference>
<dbReference type="PRO" id="PR:Q7TN12"/>
<dbReference type="Proteomes" id="UP000000589">
    <property type="component" value="Chromosome 1"/>
</dbReference>
<dbReference type="RNAct" id="Q7TN12">
    <property type="molecule type" value="protein"/>
</dbReference>
<dbReference type="GO" id="GO:0005737">
    <property type="term" value="C:cytoplasm"/>
    <property type="evidence" value="ECO:0000250"/>
    <property type="project" value="UniProtKB"/>
</dbReference>
<dbReference type="GO" id="GO:0016604">
    <property type="term" value="C:nuclear body"/>
    <property type="evidence" value="ECO:0007669"/>
    <property type="project" value="Ensembl"/>
</dbReference>
<dbReference type="GO" id="GO:0005634">
    <property type="term" value="C:nucleus"/>
    <property type="evidence" value="ECO:0000250"/>
    <property type="project" value="UniProtKB"/>
</dbReference>
<dbReference type="GO" id="GO:0034334">
    <property type="term" value="P:adherens junction maintenance"/>
    <property type="evidence" value="ECO:0000314"/>
    <property type="project" value="UniProtKB"/>
</dbReference>
<dbReference type="GO" id="GO:0045087">
    <property type="term" value="P:innate immune response"/>
    <property type="evidence" value="ECO:0000250"/>
    <property type="project" value="UniProtKB"/>
</dbReference>
<dbReference type="GO" id="GO:0060729">
    <property type="term" value="P:intestinal epithelial structure maintenance"/>
    <property type="evidence" value="ECO:0000315"/>
    <property type="project" value="UniProtKB"/>
</dbReference>
<dbReference type="GO" id="GO:0070431">
    <property type="term" value="P:nucleotide-binding oligomerization domain containing 2 signaling pathway"/>
    <property type="evidence" value="ECO:0000250"/>
    <property type="project" value="UniProtKB"/>
</dbReference>
<dbReference type="GO" id="GO:0002221">
    <property type="term" value="P:pattern recognition receptor signaling pathway"/>
    <property type="evidence" value="ECO:0000250"/>
    <property type="project" value="UniProtKB"/>
</dbReference>
<dbReference type="GO" id="GO:0043123">
    <property type="term" value="P:positive regulation of canonical NF-kappaB signal transduction"/>
    <property type="evidence" value="ECO:0000250"/>
    <property type="project" value="UniProtKB"/>
</dbReference>
<dbReference type="GO" id="GO:0002720">
    <property type="term" value="P:positive regulation of cytokine production involved in immune response"/>
    <property type="evidence" value="ECO:0000250"/>
    <property type="project" value="UniProtKB"/>
</dbReference>
<dbReference type="GO" id="GO:0032731">
    <property type="term" value="P:positive regulation of interleukin-1 beta production"/>
    <property type="evidence" value="ECO:0000250"/>
    <property type="project" value="UniProtKB"/>
</dbReference>
<dbReference type="GO" id="GO:0032733">
    <property type="term" value="P:positive regulation of interleukin-10 production"/>
    <property type="evidence" value="ECO:0000250"/>
    <property type="project" value="UniProtKB"/>
</dbReference>
<dbReference type="GO" id="GO:0032755">
    <property type="term" value="P:positive regulation of interleukin-6 production"/>
    <property type="evidence" value="ECO:0000250"/>
    <property type="project" value="UniProtKB"/>
</dbReference>
<dbReference type="GO" id="GO:0043410">
    <property type="term" value="P:positive regulation of MAPK cascade"/>
    <property type="evidence" value="ECO:0000250"/>
    <property type="project" value="UniProtKB"/>
</dbReference>
<dbReference type="GO" id="GO:0031398">
    <property type="term" value="P:positive regulation of protein ubiquitination"/>
    <property type="evidence" value="ECO:0000315"/>
    <property type="project" value="UniProtKB"/>
</dbReference>
<dbReference type="GO" id="GO:0032874">
    <property type="term" value="P:positive regulation of stress-activated MAPK cascade"/>
    <property type="evidence" value="ECO:0000250"/>
    <property type="project" value="UniProtKB"/>
</dbReference>
<dbReference type="GO" id="GO:1903409">
    <property type="term" value="P:reactive oxygen species biosynthetic process"/>
    <property type="evidence" value="ECO:0000250"/>
    <property type="project" value="UniProtKB"/>
</dbReference>
<dbReference type="GO" id="GO:0032495">
    <property type="term" value="P:response to muramyl dipeptide"/>
    <property type="evidence" value="ECO:0000250"/>
    <property type="project" value="UniProtKB"/>
</dbReference>
<dbReference type="GO" id="GO:0032494">
    <property type="term" value="P:response to peptidoglycan"/>
    <property type="evidence" value="ECO:0000250"/>
    <property type="project" value="UniProtKB"/>
</dbReference>
<dbReference type="InterPro" id="IPR043447">
    <property type="entry name" value="CCDC120/INAVA"/>
</dbReference>
<dbReference type="InterPro" id="IPR021774">
    <property type="entry name" value="CUPID"/>
</dbReference>
<dbReference type="PANTHER" id="PTHR16093">
    <property type="entry name" value="COILED-COIL DOMAIN-CONTAINING PROTEIN 120 FAMILY MEMBER"/>
    <property type="match status" value="1"/>
</dbReference>
<dbReference type="PANTHER" id="PTHR16093:SF4">
    <property type="entry name" value="INNATE IMMUNITY ACTIVATOR PROTEIN"/>
    <property type="match status" value="1"/>
</dbReference>
<dbReference type="Pfam" id="PF11819">
    <property type="entry name" value="CUPID"/>
    <property type="match status" value="1"/>
</dbReference>
<gene>
    <name evidence="1" type="primary">Inava</name>
</gene>
<reference key="1">
    <citation type="journal article" date="2004" name="Genome Res.">
        <title>The status, quality, and expansion of the NIH full-length cDNA project: the Mammalian Gene Collection (MGC).</title>
        <authorList>
            <consortium name="The MGC Project Team"/>
        </authorList>
    </citation>
    <scope>NUCLEOTIDE SEQUENCE [LARGE SCALE MRNA]</scope>
    <source>
        <strain>C57BL/6J</strain>
    </source>
</reference>
<reference key="2">
    <citation type="journal article" date="2005" name="Science">
        <title>The transcriptional landscape of the mammalian genome.</title>
        <authorList>
            <person name="Carninci P."/>
            <person name="Kasukawa T."/>
            <person name="Katayama S."/>
            <person name="Gough J."/>
            <person name="Frith M.C."/>
            <person name="Maeda N."/>
            <person name="Oyama R."/>
            <person name="Ravasi T."/>
            <person name="Lenhard B."/>
            <person name="Wells C."/>
            <person name="Kodzius R."/>
            <person name="Shimokawa K."/>
            <person name="Bajic V.B."/>
            <person name="Brenner S.E."/>
            <person name="Batalov S."/>
            <person name="Forrest A.R."/>
            <person name="Zavolan M."/>
            <person name="Davis M.J."/>
            <person name="Wilming L.G."/>
            <person name="Aidinis V."/>
            <person name="Allen J.E."/>
            <person name="Ambesi-Impiombato A."/>
            <person name="Apweiler R."/>
            <person name="Aturaliya R.N."/>
            <person name="Bailey T.L."/>
            <person name="Bansal M."/>
            <person name="Baxter L."/>
            <person name="Beisel K.W."/>
            <person name="Bersano T."/>
            <person name="Bono H."/>
            <person name="Chalk A.M."/>
            <person name="Chiu K.P."/>
            <person name="Choudhary V."/>
            <person name="Christoffels A."/>
            <person name="Clutterbuck D.R."/>
            <person name="Crowe M.L."/>
            <person name="Dalla E."/>
            <person name="Dalrymple B.P."/>
            <person name="de Bono B."/>
            <person name="Della Gatta G."/>
            <person name="di Bernardo D."/>
            <person name="Down T."/>
            <person name="Engstrom P."/>
            <person name="Fagiolini M."/>
            <person name="Faulkner G."/>
            <person name="Fletcher C.F."/>
            <person name="Fukushima T."/>
            <person name="Furuno M."/>
            <person name="Futaki S."/>
            <person name="Gariboldi M."/>
            <person name="Georgii-Hemming P."/>
            <person name="Gingeras T.R."/>
            <person name="Gojobori T."/>
            <person name="Green R.E."/>
            <person name="Gustincich S."/>
            <person name="Harbers M."/>
            <person name="Hayashi Y."/>
            <person name="Hensch T.K."/>
            <person name="Hirokawa N."/>
            <person name="Hill D."/>
            <person name="Huminiecki L."/>
            <person name="Iacono M."/>
            <person name="Ikeo K."/>
            <person name="Iwama A."/>
            <person name="Ishikawa T."/>
            <person name="Jakt M."/>
            <person name="Kanapin A."/>
            <person name="Katoh M."/>
            <person name="Kawasawa Y."/>
            <person name="Kelso J."/>
            <person name="Kitamura H."/>
            <person name="Kitano H."/>
            <person name="Kollias G."/>
            <person name="Krishnan S.P."/>
            <person name="Kruger A."/>
            <person name="Kummerfeld S.K."/>
            <person name="Kurochkin I.V."/>
            <person name="Lareau L.F."/>
            <person name="Lazarevic D."/>
            <person name="Lipovich L."/>
            <person name="Liu J."/>
            <person name="Liuni S."/>
            <person name="McWilliam S."/>
            <person name="Madan Babu M."/>
            <person name="Madera M."/>
            <person name="Marchionni L."/>
            <person name="Matsuda H."/>
            <person name="Matsuzawa S."/>
            <person name="Miki H."/>
            <person name="Mignone F."/>
            <person name="Miyake S."/>
            <person name="Morris K."/>
            <person name="Mottagui-Tabar S."/>
            <person name="Mulder N."/>
            <person name="Nakano N."/>
            <person name="Nakauchi H."/>
            <person name="Ng P."/>
            <person name="Nilsson R."/>
            <person name="Nishiguchi S."/>
            <person name="Nishikawa S."/>
            <person name="Nori F."/>
            <person name="Ohara O."/>
            <person name="Okazaki Y."/>
            <person name="Orlando V."/>
            <person name="Pang K.C."/>
            <person name="Pavan W.J."/>
            <person name="Pavesi G."/>
            <person name="Pesole G."/>
            <person name="Petrovsky N."/>
            <person name="Piazza S."/>
            <person name="Reed J."/>
            <person name="Reid J.F."/>
            <person name="Ring B.Z."/>
            <person name="Ringwald M."/>
            <person name="Rost B."/>
            <person name="Ruan Y."/>
            <person name="Salzberg S.L."/>
            <person name="Sandelin A."/>
            <person name="Schneider C."/>
            <person name="Schoenbach C."/>
            <person name="Sekiguchi K."/>
            <person name="Semple C.A."/>
            <person name="Seno S."/>
            <person name="Sessa L."/>
            <person name="Sheng Y."/>
            <person name="Shibata Y."/>
            <person name="Shimada H."/>
            <person name="Shimada K."/>
            <person name="Silva D."/>
            <person name="Sinclair B."/>
            <person name="Sperling S."/>
            <person name="Stupka E."/>
            <person name="Sugiura K."/>
            <person name="Sultana R."/>
            <person name="Takenaka Y."/>
            <person name="Taki K."/>
            <person name="Tammoja K."/>
            <person name="Tan S.L."/>
            <person name="Tang S."/>
            <person name="Taylor M.S."/>
            <person name="Tegner J."/>
            <person name="Teichmann S.A."/>
            <person name="Ueda H.R."/>
            <person name="van Nimwegen E."/>
            <person name="Verardo R."/>
            <person name="Wei C.L."/>
            <person name="Yagi K."/>
            <person name="Yamanishi H."/>
            <person name="Zabarovsky E."/>
            <person name="Zhu S."/>
            <person name="Zimmer A."/>
            <person name="Hide W."/>
            <person name="Bult C."/>
            <person name="Grimmond S.M."/>
            <person name="Teasdale R.D."/>
            <person name="Liu E.T."/>
            <person name="Brusic V."/>
            <person name="Quackenbush J."/>
            <person name="Wahlestedt C."/>
            <person name="Mattick J.S."/>
            <person name="Hume D.A."/>
            <person name="Kai C."/>
            <person name="Sasaki D."/>
            <person name="Tomaru Y."/>
            <person name="Fukuda S."/>
            <person name="Kanamori-Katayama M."/>
            <person name="Suzuki M."/>
            <person name="Aoki J."/>
            <person name="Arakawa T."/>
            <person name="Iida J."/>
            <person name="Imamura K."/>
            <person name="Itoh M."/>
            <person name="Kato T."/>
            <person name="Kawaji H."/>
            <person name="Kawagashira N."/>
            <person name="Kawashima T."/>
            <person name="Kojima M."/>
            <person name="Kondo S."/>
            <person name="Konno H."/>
            <person name="Nakano K."/>
            <person name="Ninomiya N."/>
            <person name="Nishio T."/>
            <person name="Okada M."/>
            <person name="Plessy C."/>
            <person name="Shibata K."/>
            <person name="Shiraki T."/>
            <person name="Suzuki S."/>
            <person name="Tagami M."/>
            <person name="Waki K."/>
            <person name="Watahiki A."/>
            <person name="Okamura-Oho Y."/>
            <person name="Suzuki H."/>
            <person name="Kawai J."/>
            <person name="Hayashizaki Y."/>
        </authorList>
    </citation>
    <scope>NUCLEOTIDE SEQUENCE [LARGE SCALE MRNA] OF 564-663</scope>
    <source>
        <strain>C57BL/6J</strain>
        <tissue>Testis</tissue>
    </source>
</reference>
<reference key="3">
    <citation type="journal article" date="2018" name="Science">
        <title>C1orf106 is a colitis risk gene that regulates stability of epithelial adherens junctions.</title>
        <authorList>
            <person name="Mohanan V."/>
            <person name="Nakata T."/>
            <person name="Desch A.N."/>
            <person name="Levesque C."/>
            <person name="Boroughs A."/>
            <person name="Guzman G."/>
            <person name="Cao Z."/>
            <person name="Creasey E."/>
            <person name="Yao J."/>
            <person name="Boucher G."/>
            <person name="Charron G."/>
            <person name="Bhan A.K."/>
            <person name="Schenone M."/>
            <person name="Carr S.A."/>
            <person name="Reinecker H.C."/>
            <person name="Daly M.J."/>
            <person name="Rioux J.D."/>
            <person name="Lassen K.G."/>
            <person name="Xavier R.J."/>
        </authorList>
    </citation>
    <scope>FUNCTION</scope>
    <scope>DISRUPTION PHENOTYPE</scope>
</reference>
<sequence>MLQMPKLNEIPPGRGGPGEPWGEGRWAGPTGPEAARPARGARGQARGARARWDSWEHSRLPTHPGPGWDQCSPSFLCAPSSQKLIMESKDEVSDSDSGIILQSGPDSPVSPMKELTNAVRKQQRALEARLEACLEELRRLCLREAELTGTLPAEYPLKPGEKAPKVRRRIGAAYKLDEWALHREDPLSSLERQLALQLQITEAARRLCAEENLSRQARRQRKHAALQEEKKLRDLQRCLGDRRRNSEPPPTTVPSLGRELSASDDSSLSDGLLLEEEDSQAPKPPPESPAPPSRPLPPQSLEGLQPTGPESGGQERAPIQNSPWKETSLDHPYEKPRKSSELSSESSSPATTPQDQPNPSSLWVLDAASYHVVPIRNVPGQRQGRTSAPATPEMQGRRGQSQSLRVDSFRAGAEGRGRSAFPRRRPTHYTVTVPDSCFTPGKPPLPHPACHSCSEDSGSDVSSISHPTSPGSSSPDISFLRPLCLPEPPRHRGAWGPACGRELAPHYSKLLLPAGYFPTGRYVMVAEGHLPPGEWELCRAAVGAAYDEEGAPLRYQRLVPSHSRIVRTPSLKDSPAGRGLSKAAVSEELKWWHERARLRSSRPHSLDRQGAFRVRSLPPGRESFGRASGPRTQVPPVYVLRRSTDGAPVQVFVPENGEIISQV</sequence>
<keyword id="KW-0175">Coiled coil</keyword>
<keyword id="KW-0963">Cytoplasm</keyword>
<keyword id="KW-0391">Immunity</keyword>
<keyword id="KW-0399">Innate immunity</keyword>
<keyword id="KW-0539">Nucleus</keyword>
<keyword id="KW-1185">Reference proteome</keyword>